<organism>
    <name type="scientific">Yersinia pseudotuberculosis serotype I (strain IP32953)</name>
    <dbReference type="NCBI Taxonomy" id="273123"/>
    <lineage>
        <taxon>Bacteria</taxon>
        <taxon>Pseudomonadati</taxon>
        <taxon>Pseudomonadota</taxon>
        <taxon>Gammaproteobacteria</taxon>
        <taxon>Enterobacterales</taxon>
        <taxon>Yersiniaceae</taxon>
        <taxon>Yersinia</taxon>
    </lineage>
</organism>
<feature type="chain" id="PRO_0000192548" description="Glutamate--cysteine ligase">
    <location>
        <begin position="1"/>
        <end position="519"/>
    </location>
</feature>
<keyword id="KW-0067">ATP-binding</keyword>
<keyword id="KW-0317">Glutathione biosynthesis</keyword>
<keyword id="KW-0436">Ligase</keyword>
<keyword id="KW-0547">Nucleotide-binding</keyword>
<proteinExistence type="inferred from homology"/>
<accession>Q66E64</accession>
<protein>
    <recommendedName>
        <fullName evidence="1">Glutamate--cysteine ligase</fullName>
        <ecNumber evidence="1">6.3.2.2</ecNumber>
    </recommendedName>
    <alternativeName>
        <fullName evidence="1">Gamma-ECS</fullName>
        <shortName evidence="1">GCS</shortName>
    </alternativeName>
    <alternativeName>
        <fullName evidence="1">Gamma-glutamylcysteine synthetase</fullName>
    </alternativeName>
</protein>
<sequence length="519" mass="58497">MIPDVSHALTWLEAHPKALKGIRRGIERETLRVTADGHLASTGHPESLGAALTHQWITTDFAEALLEFITPVDGDIDHLLTFLRDIHRYTARKLGDERMWPLSMPCFIEAEQDIELAKYGSSNIGRFKTLYREGLKNRYGALMQTISGVHYNFSLPLEFWQAWAGVTDEQSGKEEISAGYFRLIRNYYRFGWVIPYLFGASPAICSSFLQGRETALPFERNGKGMCYLPYATSLRLSDLGYTNKSQSNLGITFNDLHTYVDALKRAIQTPSEEYVALGLKDGDRHLQLNTNVLQIENELYAPIRPKRVTRAGESPSDALLRGGIEYIEVRSLDINPFSPIGVDAVQARFLDLFLIWCVLADAPEMSSDELLCTRKNWDRVILEGRKPGQTIGIGCSDSRQPLETVGKALFADLRRVAEVLDGSESASYQQVCDELVASFDDPELTFSARILKVMQEKGIGGVGLELAEHYREMLQNEPLELLTEEQLSAERDASRQRQHELELKDKLSFEEYLALHGGQ</sequence>
<dbReference type="EC" id="6.3.2.2" evidence="1"/>
<dbReference type="EMBL" id="BX936398">
    <property type="protein sequence ID" value="CAH20069.1"/>
    <property type="molecule type" value="Genomic_DNA"/>
</dbReference>
<dbReference type="SMR" id="Q66E64"/>
<dbReference type="KEGG" id="ypo:BZ17_1722"/>
<dbReference type="KEGG" id="yps:YPTB0829"/>
<dbReference type="PATRIC" id="fig|273123.14.peg.1828"/>
<dbReference type="UniPathway" id="UPA00142">
    <property type="reaction ID" value="UER00209"/>
</dbReference>
<dbReference type="Proteomes" id="UP000001011">
    <property type="component" value="Chromosome"/>
</dbReference>
<dbReference type="GO" id="GO:0005829">
    <property type="term" value="C:cytosol"/>
    <property type="evidence" value="ECO:0007669"/>
    <property type="project" value="TreeGrafter"/>
</dbReference>
<dbReference type="GO" id="GO:0005524">
    <property type="term" value="F:ATP binding"/>
    <property type="evidence" value="ECO:0007669"/>
    <property type="project" value="UniProtKB-KW"/>
</dbReference>
<dbReference type="GO" id="GO:0004357">
    <property type="term" value="F:glutamate-cysteine ligase activity"/>
    <property type="evidence" value="ECO:0007669"/>
    <property type="project" value="UniProtKB-UniRule"/>
</dbReference>
<dbReference type="GO" id="GO:0046872">
    <property type="term" value="F:metal ion binding"/>
    <property type="evidence" value="ECO:0007669"/>
    <property type="project" value="TreeGrafter"/>
</dbReference>
<dbReference type="GO" id="GO:0006750">
    <property type="term" value="P:glutathione biosynthetic process"/>
    <property type="evidence" value="ECO:0007669"/>
    <property type="project" value="UniProtKB-UniRule"/>
</dbReference>
<dbReference type="FunFam" id="3.30.590.20:FF:000001">
    <property type="entry name" value="Glutamate--cysteine ligase"/>
    <property type="match status" value="1"/>
</dbReference>
<dbReference type="Gene3D" id="3.30.590.20">
    <property type="match status" value="1"/>
</dbReference>
<dbReference type="HAMAP" id="MF_00578">
    <property type="entry name" value="Glu_cys_ligase"/>
    <property type="match status" value="1"/>
</dbReference>
<dbReference type="InterPro" id="IPR014746">
    <property type="entry name" value="Gln_synth/guanido_kin_cat_dom"/>
</dbReference>
<dbReference type="InterPro" id="IPR007370">
    <property type="entry name" value="Glu_cys_ligase"/>
</dbReference>
<dbReference type="InterPro" id="IPR006334">
    <property type="entry name" value="Glut_cys_ligase"/>
</dbReference>
<dbReference type="NCBIfam" id="TIGR01434">
    <property type="entry name" value="glu_cys_ligase"/>
    <property type="match status" value="1"/>
</dbReference>
<dbReference type="PANTHER" id="PTHR38761">
    <property type="entry name" value="GLUTAMATE--CYSTEINE LIGASE"/>
    <property type="match status" value="1"/>
</dbReference>
<dbReference type="PANTHER" id="PTHR38761:SF1">
    <property type="entry name" value="GLUTAMATE--CYSTEINE LIGASE"/>
    <property type="match status" value="1"/>
</dbReference>
<dbReference type="Pfam" id="PF04262">
    <property type="entry name" value="Glu_cys_ligase"/>
    <property type="match status" value="1"/>
</dbReference>
<dbReference type="SUPFAM" id="SSF55931">
    <property type="entry name" value="Glutamine synthetase/guanido kinase"/>
    <property type="match status" value="1"/>
</dbReference>
<name>GSH1_YERPS</name>
<evidence type="ECO:0000255" key="1">
    <source>
        <dbReference type="HAMAP-Rule" id="MF_00578"/>
    </source>
</evidence>
<comment type="catalytic activity">
    <reaction evidence="1">
        <text>L-cysteine + L-glutamate + ATP = gamma-L-glutamyl-L-cysteine + ADP + phosphate + H(+)</text>
        <dbReference type="Rhea" id="RHEA:13285"/>
        <dbReference type="ChEBI" id="CHEBI:15378"/>
        <dbReference type="ChEBI" id="CHEBI:29985"/>
        <dbReference type="ChEBI" id="CHEBI:30616"/>
        <dbReference type="ChEBI" id="CHEBI:35235"/>
        <dbReference type="ChEBI" id="CHEBI:43474"/>
        <dbReference type="ChEBI" id="CHEBI:58173"/>
        <dbReference type="ChEBI" id="CHEBI:456216"/>
        <dbReference type="EC" id="6.3.2.2"/>
    </reaction>
</comment>
<comment type="pathway">
    <text evidence="1">Sulfur metabolism; glutathione biosynthesis; glutathione from L-cysteine and L-glutamate: step 1/2.</text>
</comment>
<comment type="similarity">
    <text evidence="1">Belongs to the glutamate--cysteine ligase type 1 family. Type 1 subfamily.</text>
</comment>
<gene>
    <name evidence="1" type="primary">gshA</name>
    <name type="ordered locus">YPTB0829</name>
</gene>
<reference key="1">
    <citation type="journal article" date="2004" name="Proc. Natl. Acad. Sci. U.S.A.">
        <title>Insights into the evolution of Yersinia pestis through whole-genome comparison with Yersinia pseudotuberculosis.</title>
        <authorList>
            <person name="Chain P.S.G."/>
            <person name="Carniel E."/>
            <person name="Larimer F.W."/>
            <person name="Lamerdin J."/>
            <person name="Stoutland P.O."/>
            <person name="Regala W.M."/>
            <person name="Georgescu A.M."/>
            <person name="Vergez L.M."/>
            <person name="Land M.L."/>
            <person name="Motin V.L."/>
            <person name="Brubaker R.R."/>
            <person name="Fowler J."/>
            <person name="Hinnebusch J."/>
            <person name="Marceau M."/>
            <person name="Medigue C."/>
            <person name="Simonet M."/>
            <person name="Chenal-Francisque V."/>
            <person name="Souza B."/>
            <person name="Dacheux D."/>
            <person name="Elliott J.M."/>
            <person name="Derbise A."/>
            <person name="Hauser L.J."/>
            <person name="Garcia E."/>
        </authorList>
    </citation>
    <scope>NUCLEOTIDE SEQUENCE [LARGE SCALE GENOMIC DNA]</scope>
    <source>
        <strain>IP32953</strain>
    </source>
</reference>